<protein>
    <recommendedName>
        <fullName evidence="1">Cytosolic Fe-S cluster assembly factor CFD1</fullName>
    </recommendedName>
    <alternativeName>
        <fullName evidence="1">Cytosolic Fe-S cluster-deficient protein 1</fullName>
    </alternativeName>
</protein>
<gene>
    <name evidence="1" type="primary">CFD1</name>
    <name type="ordered locus">KLLA0D13970g</name>
</gene>
<evidence type="ECO:0000255" key="1">
    <source>
        <dbReference type="HAMAP-Rule" id="MF_03039"/>
    </source>
</evidence>
<name>CFD1_KLULA</name>
<sequence>MSAETELLGMPESLKDIKHIILVLSGKGGVGKSSVTTQTALTLCLKGYKVGVLDIDLTGPSLPRMFGLENKQVYQASKGWIPVSVPTTSGGELKLMSLGFLLDDRGNSVVWRGPKKSAMIKQFIKDVDWGDLDYLIIDTPPGTSDEHISIAEELRWAAPDGAIIVTTPQGVATADVRKEINFCKKVNFNILGVIENMSGFICPHCAECTDIFSRGGGFKLASEYNVPYLGNIPIDPTFVELIEKQTGFKESLVDLYKDSGLYVIFSKILDNVLNGEVKSGTDQ</sequence>
<dbReference type="EMBL" id="CR382124">
    <property type="protein sequence ID" value="CAH00781.1"/>
    <property type="molecule type" value="Genomic_DNA"/>
</dbReference>
<dbReference type="RefSeq" id="XP_453685.1">
    <property type="nucleotide sequence ID" value="XM_453685.1"/>
</dbReference>
<dbReference type="SMR" id="Q6CQV4"/>
<dbReference type="FunCoup" id="Q6CQV4">
    <property type="interactions" value="175"/>
</dbReference>
<dbReference type="STRING" id="284590.Q6CQV4"/>
<dbReference type="PaxDb" id="284590-Q6CQV4"/>
<dbReference type="KEGG" id="kla:KLLA0_D13970g"/>
<dbReference type="eggNOG" id="KOG3022">
    <property type="taxonomic scope" value="Eukaryota"/>
</dbReference>
<dbReference type="HOGENOM" id="CLU_024839_0_1_1"/>
<dbReference type="InParanoid" id="Q6CQV4"/>
<dbReference type="OMA" id="WIPVFAD"/>
<dbReference type="Proteomes" id="UP000000598">
    <property type="component" value="Chromosome D"/>
</dbReference>
<dbReference type="GO" id="GO:0005829">
    <property type="term" value="C:cytosol"/>
    <property type="evidence" value="ECO:0007669"/>
    <property type="project" value="TreeGrafter"/>
</dbReference>
<dbReference type="GO" id="GO:0051539">
    <property type="term" value="F:4 iron, 4 sulfur cluster binding"/>
    <property type="evidence" value="ECO:0007669"/>
    <property type="project" value="UniProtKB-UniRule"/>
</dbReference>
<dbReference type="GO" id="GO:0005524">
    <property type="term" value="F:ATP binding"/>
    <property type="evidence" value="ECO:0007669"/>
    <property type="project" value="UniProtKB-KW"/>
</dbReference>
<dbReference type="GO" id="GO:0140663">
    <property type="term" value="F:ATP-dependent FeS chaperone activity"/>
    <property type="evidence" value="ECO:0007669"/>
    <property type="project" value="InterPro"/>
</dbReference>
<dbReference type="GO" id="GO:0046872">
    <property type="term" value="F:metal ion binding"/>
    <property type="evidence" value="ECO:0007669"/>
    <property type="project" value="UniProtKB-KW"/>
</dbReference>
<dbReference type="GO" id="GO:0016226">
    <property type="term" value="P:iron-sulfur cluster assembly"/>
    <property type="evidence" value="ECO:0007669"/>
    <property type="project" value="UniProtKB-UniRule"/>
</dbReference>
<dbReference type="CDD" id="cd02037">
    <property type="entry name" value="Mrp_NBP35"/>
    <property type="match status" value="1"/>
</dbReference>
<dbReference type="FunFam" id="3.40.50.300:FF:001300">
    <property type="entry name" value="Cytosolic Fe-S cluster assembly factor CFD1"/>
    <property type="match status" value="1"/>
</dbReference>
<dbReference type="Gene3D" id="3.40.50.300">
    <property type="entry name" value="P-loop containing nucleotide triphosphate hydrolases"/>
    <property type="match status" value="1"/>
</dbReference>
<dbReference type="HAMAP" id="MF_02040">
    <property type="entry name" value="Mrp_NBP35"/>
    <property type="match status" value="1"/>
</dbReference>
<dbReference type="HAMAP" id="MF_03039">
    <property type="entry name" value="NUBP2"/>
    <property type="match status" value="1"/>
</dbReference>
<dbReference type="InterPro" id="IPR000808">
    <property type="entry name" value="Mrp-like_CS"/>
</dbReference>
<dbReference type="InterPro" id="IPR019591">
    <property type="entry name" value="Mrp/NBP35_ATP-bd"/>
</dbReference>
<dbReference type="InterPro" id="IPR028600">
    <property type="entry name" value="NUBP2/Cfd1_eukaryotes"/>
</dbReference>
<dbReference type="InterPro" id="IPR027417">
    <property type="entry name" value="P-loop_NTPase"/>
</dbReference>
<dbReference type="InterPro" id="IPR033756">
    <property type="entry name" value="YlxH/NBP35"/>
</dbReference>
<dbReference type="PANTHER" id="PTHR23264:SF19">
    <property type="entry name" value="CYTOSOLIC FE-S CLUSTER ASSEMBLY FACTOR NUBP2"/>
    <property type="match status" value="1"/>
</dbReference>
<dbReference type="PANTHER" id="PTHR23264">
    <property type="entry name" value="NUCLEOTIDE-BINDING PROTEIN NBP35 YEAST -RELATED"/>
    <property type="match status" value="1"/>
</dbReference>
<dbReference type="Pfam" id="PF10609">
    <property type="entry name" value="ParA"/>
    <property type="match status" value="1"/>
</dbReference>
<dbReference type="SUPFAM" id="SSF52540">
    <property type="entry name" value="P-loop containing nucleoside triphosphate hydrolases"/>
    <property type="match status" value="1"/>
</dbReference>
<dbReference type="PROSITE" id="PS01215">
    <property type="entry name" value="MRP"/>
    <property type="match status" value="1"/>
</dbReference>
<keyword id="KW-0004">4Fe-4S</keyword>
<keyword id="KW-0067">ATP-binding</keyword>
<keyword id="KW-0963">Cytoplasm</keyword>
<keyword id="KW-0408">Iron</keyword>
<keyword id="KW-0411">Iron-sulfur</keyword>
<keyword id="KW-0479">Metal-binding</keyword>
<keyword id="KW-0547">Nucleotide-binding</keyword>
<keyword id="KW-1185">Reference proteome</keyword>
<proteinExistence type="inferred from homology"/>
<organism>
    <name type="scientific">Kluyveromyces lactis (strain ATCC 8585 / CBS 2359 / DSM 70799 / NBRC 1267 / NRRL Y-1140 / WM37)</name>
    <name type="common">Yeast</name>
    <name type="synonym">Candida sphaerica</name>
    <dbReference type="NCBI Taxonomy" id="284590"/>
    <lineage>
        <taxon>Eukaryota</taxon>
        <taxon>Fungi</taxon>
        <taxon>Dikarya</taxon>
        <taxon>Ascomycota</taxon>
        <taxon>Saccharomycotina</taxon>
        <taxon>Saccharomycetes</taxon>
        <taxon>Saccharomycetales</taxon>
        <taxon>Saccharomycetaceae</taxon>
        <taxon>Kluyveromyces</taxon>
    </lineage>
</organism>
<comment type="function">
    <text evidence="1">Component of the cytosolic iron-sulfur (Fe/S) protein assembly (CIA) machinery. Required for maturation of extramitochondrial Fe-S proteins. The NBP35-CFD1 heterotetramer forms a Fe-S scaffold complex, mediating the de novo assembly of an Fe-S cluster and its transfer to target apoproteins. Required for biogenesis and export of both ribosomal subunits, which may reflect a role in assembly of the Fe/S clusters in RLI1, a protein which performs rRNA processing and ribosome export.</text>
</comment>
<comment type="cofactor">
    <cofactor evidence="1">
        <name>[4Fe-4S] cluster</name>
        <dbReference type="ChEBI" id="CHEBI:49883"/>
    </cofactor>
    <text evidence="1">Binds 4 [4Fe-4S] clusters per heterotetramer. Contains two stable clusters in the N-termini of NBP35 and two labile, bridging clusters between subunits of the NBP35-CFD1 heterotetramer.</text>
</comment>
<comment type="subunit">
    <text evidence="1">Heterotetramer of 2 NBP35 and 2 CFD1 chains.</text>
</comment>
<comment type="subcellular location">
    <subcellularLocation>
        <location evidence="1">Cytoplasm</location>
    </subcellularLocation>
</comment>
<comment type="similarity">
    <text evidence="1">Belongs to the Mrp/NBP35 ATP-binding proteins family. NUBP2/CFD1 subfamily.</text>
</comment>
<reference key="1">
    <citation type="journal article" date="2004" name="Nature">
        <title>Genome evolution in yeasts.</title>
        <authorList>
            <person name="Dujon B."/>
            <person name="Sherman D."/>
            <person name="Fischer G."/>
            <person name="Durrens P."/>
            <person name="Casaregola S."/>
            <person name="Lafontaine I."/>
            <person name="de Montigny J."/>
            <person name="Marck C."/>
            <person name="Neuveglise C."/>
            <person name="Talla E."/>
            <person name="Goffard N."/>
            <person name="Frangeul L."/>
            <person name="Aigle M."/>
            <person name="Anthouard V."/>
            <person name="Babour A."/>
            <person name="Barbe V."/>
            <person name="Barnay S."/>
            <person name="Blanchin S."/>
            <person name="Beckerich J.-M."/>
            <person name="Beyne E."/>
            <person name="Bleykasten C."/>
            <person name="Boisrame A."/>
            <person name="Boyer J."/>
            <person name="Cattolico L."/>
            <person name="Confanioleri F."/>
            <person name="de Daruvar A."/>
            <person name="Despons L."/>
            <person name="Fabre E."/>
            <person name="Fairhead C."/>
            <person name="Ferry-Dumazet H."/>
            <person name="Groppi A."/>
            <person name="Hantraye F."/>
            <person name="Hennequin C."/>
            <person name="Jauniaux N."/>
            <person name="Joyet P."/>
            <person name="Kachouri R."/>
            <person name="Kerrest A."/>
            <person name="Koszul R."/>
            <person name="Lemaire M."/>
            <person name="Lesur I."/>
            <person name="Ma L."/>
            <person name="Muller H."/>
            <person name="Nicaud J.-M."/>
            <person name="Nikolski M."/>
            <person name="Oztas S."/>
            <person name="Ozier-Kalogeropoulos O."/>
            <person name="Pellenz S."/>
            <person name="Potier S."/>
            <person name="Richard G.-F."/>
            <person name="Straub M.-L."/>
            <person name="Suleau A."/>
            <person name="Swennen D."/>
            <person name="Tekaia F."/>
            <person name="Wesolowski-Louvel M."/>
            <person name="Westhof E."/>
            <person name="Wirth B."/>
            <person name="Zeniou-Meyer M."/>
            <person name="Zivanovic Y."/>
            <person name="Bolotin-Fukuhara M."/>
            <person name="Thierry A."/>
            <person name="Bouchier C."/>
            <person name="Caudron B."/>
            <person name="Scarpelli C."/>
            <person name="Gaillardin C."/>
            <person name="Weissenbach J."/>
            <person name="Wincker P."/>
            <person name="Souciet J.-L."/>
        </authorList>
    </citation>
    <scope>NUCLEOTIDE SEQUENCE [LARGE SCALE GENOMIC DNA]</scope>
    <source>
        <strain>ATCC 8585 / CBS 2359 / DSM 70799 / NBRC 1267 / NRRL Y-1140 / WM37</strain>
    </source>
</reference>
<feature type="chain" id="PRO_0000278880" description="Cytosolic Fe-S cluster assembly factor CFD1">
    <location>
        <begin position="1"/>
        <end position="283"/>
    </location>
</feature>
<feature type="binding site" evidence="1">
    <location>
        <begin position="26"/>
        <end position="33"/>
    </location>
    <ligand>
        <name>ATP</name>
        <dbReference type="ChEBI" id="CHEBI:30616"/>
    </ligand>
</feature>
<feature type="binding site" evidence="1">
    <location>
        <position position="202"/>
    </location>
    <ligand>
        <name>[4Fe-4S] cluster</name>
        <dbReference type="ChEBI" id="CHEBI:49883"/>
        <note>ligand shared between dimeric partners</note>
    </ligand>
</feature>
<feature type="binding site" evidence="1">
    <location>
        <position position="205"/>
    </location>
    <ligand>
        <name>[4Fe-4S] cluster</name>
        <dbReference type="ChEBI" id="CHEBI:49883"/>
        <note>ligand shared between dimeric partners</note>
    </ligand>
</feature>
<accession>Q6CQV4</accession>